<comment type="subcellular location">
    <subcellularLocation>
        <location evidence="1">Cell membrane</location>
        <topology evidence="1">Multi-pass membrane protein</topology>
    </subcellularLocation>
</comment>
<comment type="similarity">
    <text evidence="1">Belongs to the UPF0114 family.</text>
</comment>
<name>Y2386_SERP5</name>
<organism>
    <name type="scientific">Serratia proteamaculans (strain 568)</name>
    <dbReference type="NCBI Taxonomy" id="399741"/>
    <lineage>
        <taxon>Bacteria</taxon>
        <taxon>Pseudomonadati</taxon>
        <taxon>Pseudomonadota</taxon>
        <taxon>Gammaproteobacteria</taxon>
        <taxon>Enterobacterales</taxon>
        <taxon>Yersiniaceae</taxon>
        <taxon>Serratia</taxon>
    </lineage>
</organism>
<proteinExistence type="inferred from homology"/>
<protein>
    <recommendedName>
        <fullName evidence="1">UPF0114 protein Spro_2386</fullName>
    </recommendedName>
</protein>
<feature type="chain" id="PRO_1000057941" description="UPF0114 protein Spro_2386">
    <location>
        <begin position="1"/>
        <end position="164"/>
    </location>
</feature>
<feature type="transmembrane region" description="Helical" evidence="1">
    <location>
        <begin position="15"/>
        <end position="35"/>
    </location>
</feature>
<feature type="transmembrane region" description="Helical" evidence="1">
    <location>
        <begin position="53"/>
        <end position="73"/>
    </location>
</feature>
<feature type="transmembrane region" description="Helical" evidence="1">
    <location>
        <begin position="136"/>
        <end position="156"/>
    </location>
</feature>
<sequence length="164" mass="18497">MERFLENAMYASRWLLAPVYFGLSLALLALSIKFFQEIIHVLPNIFAIAEADLVLTLLSLIDMALVGGLLVMVMFSGYENFVSQLDISDDKEKLSWLGKMDSTSLKSKVAASIVAISSIHLLRVFMDAKNVPDNKLMWYVIIHLTFVLSAFVMGYLDKLTRDKK</sequence>
<accession>A8GEE7</accession>
<keyword id="KW-1003">Cell membrane</keyword>
<keyword id="KW-0472">Membrane</keyword>
<keyword id="KW-0812">Transmembrane</keyword>
<keyword id="KW-1133">Transmembrane helix</keyword>
<reference key="1">
    <citation type="submission" date="2007-09" db="EMBL/GenBank/DDBJ databases">
        <title>Complete sequence of chromosome of Serratia proteamaculans 568.</title>
        <authorList>
            <consortium name="US DOE Joint Genome Institute"/>
            <person name="Copeland A."/>
            <person name="Lucas S."/>
            <person name="Lapidus A."/>
            <person name="Barry K."/>
            <person name="Glavina del Rio T."/>
            <person name="Dalin E."/>
            <person name="Tice H."/>
            <person name="Pitluck S."/>
            <person name="Chain P."/>
            <person name="Malfatti S."/>
            <person name="Shin M."/>
            <person name="Vergez L."/>
            <person name="Schmutz J."/>
            <person name="Larimer F."/>
            <person name="Land M."/>
            <person name="Hauser L."/>
            <person name="Kyrpides N."/>
            <person name="Kim E."/>
            <person name="Taghavi S."/>
            <person name="Newman L."/>
            <person name="Vangronsveld J."/>
            <person name="van der Lelie D."/>
            <person name="Richardson P."/>
        </authorList>
    </citation>
    <scope>NUCLEOTIDE SEQUENCE [LARGE SCALE GENOMIC DNA]</scope>
    <source>
        <strain>568</strain>
    </source>
</reference>
<evidence type="ECO:0000255" key="1">
    <source>
        <dbReference type="HAMAP-Rule" id="MF_00143"/>
    </source>
</evidence>
<gene>
    <name type="ordered locus">Spro_2386</name>
</gene>
<dbReference type="EMBL" id="CP000826">
    <property type="protein sequence ID" value="ABV41487.1"/>
    <property type="molecule type" value="Genomic_DNA"/>
</dbReference>
<dbReference type="KEGG" id="spe:Spro_2386"/>
<dbReference type="eggNOG" id="COG2862">
    <property type="taxonomic scope" value="Bacteria"/>
</dbReference>
<dbReference type="HOGENOM" id="CLU_097887_1_1_6"/>
<dbReference type="OrthoDB" id="9783569at2"/>
<dbReference type="GO" id="GO:0005886">
    <property type="term" value="C:plasma membrane"/>
    <property type="evidence" value="ECO:0007669"/>
    <property type="project" value="UniProtKB-SubCell"/>
</dbReference>
<dbReference type="HAMAP" id="MF_00143">
    <property type="entry name" value="UPF0114"/>
    <property type="match status" value="1"/>
</dbReference>
<dbReference type="InterPro" id="IPR005134">
    <property type="entry name" value="UPF0114"/>
</dbReference>
<dbReference type="InterPro" id="IPR020761">
    <property type="entry name" value="UPF0114_bac"/>
</dbReference>
<dbReference type="NCBIfam" id="TIGR00645">
    <property type="entry name" value="HI0507"/>
    <property type="match status" value="1"/>
</dbReference>
<dbReference type="PANTHER" id="PTHR38596">
    <property type="entry name" value="UPF0114 PROTEIN YQHA"/>
    <property type="match status" value="1"/>
</dbReference>
<dbReference type="PANTHER" id="PTHR38596:SF1">
    <property type="entry name" value="UPF0114 PROTEIN YQHA"/>
    <property type="match status" value="1"/>
</dbReference>
<dbReference type="Pfam" id="PF03350">
    <property type="entry name" value="UPF0114"/>
    <property type="match status" value="1"/>
</dbReference>